<sequence length="485" mass="54023">MTSQYVTEPPSSGLVDLVTSKGTISIALFPTQAPLACRNFLTLALEGFYDNLVFHRLIPNFILQTGDPSATGTGGESIYGEPFPIESHSRLKFNRRGLLGMAANQDRTNESQFFLTLDATPELTGKHTLMGKVEGKSIYTLVELVEGVELVDGDRPRYPIKLHEVRVVENPFDDLQPRTTKKQRIAEERRKKHEMETRVAEEQKRKRSKAKKNTGLLSFGAEEEAEDEVALKGPKSSHDLLKDDKHLSRQTIETSKSTKANTPAVSANISSKEKRFLAQSSSSTTPPAVTKQASKDGTSDAPHPTATLKSEHSGPSDQKASSSTGRDFLASQRAKYLSSSHPSTAKQDDSYSALLSFQSRLRTRPSSTTPIAKPLPSVGVDEVEEEAGEYGASDDDDDWRSHRLDAGGQPLVAGQNAGKDTLEDYEVLDPRDHTDRERNPKAESSRDGKRGRDWVEHDRKYQNDRSRRHREHDKHPQQRRQRSII</sequence>
<organism>
    <name type="scientific">Mycosarcoma maydis</name>
    <name type="common">Corn smut fungus</name>
    <name type="synonym">Ustilago maydis</name>
    <dbReference type="NCBI Taxonomy" id="5270"/>
    <lineage>
        <taxon>Eukaryota</taxon>
        <taxon>Fungi</taxon>
        <taxon>Dikarya</taxon>
        <taxon>Basidiomycota</taxon>
        <taxon>Ustilaginomycotina</taxon>
        <taxon>Ustilaginomycetes</taxon>
        <taxon>Ustilaginales</taxon>
        <taxon>Ustilaginaceae</taxon>
        <taxon>Mycosarcoma</taxon>
    </lineage>
</organism>
<reference key="1">
    <citation type="journal article" date="2006" name="Nature">
        <title>Insights from the genome of the biotrophic fungal plant pathogen Ustilago maydis.</title>
        <authorList>
            <person name="Kaemper J."/>
            <person name="Kahmann R."/>
            <person name="Boelker M."/>
            <person name="Ma L.-J."/>
            <person name="Brefort T."/>
            <person name="Saville B.J."/>
            <person name="Banuett F."/>
            <person name="Kronstad J.W."/>
            <person name="Gold S.E."/>
            <person name="Mueller O."/>
            <person name="Perlin M.H."/>
            <person name="Woesten H.A.B."/>
            <person name="de Vries R."/>
            <person name="Ruiz-Herrera J."/>
            <person name="Reynaga-Pena C.G."/>
            <person name="Snetselaar K."/>
            <person name="McCann M."/>
            <person name="Perez-Martin J."/>
            <person name="Feldbruegge M."/>
            <person name="Basse C.W."/>
            <person name="Steinberg G."/>
            <person name="Ibeas J.I."/>
            <person name="Holloman W."/>
            <person name="Guzman P."/>
            <person name="Farman M.L."/>
            <person name="Stajich J.E."/>
            <person name="Sentandreu R."/>
            <person name="Gonzalez-Prieto J.M."/>
            <person name="Kennell J.C."/>
            <person name="Molina L."/>
            <person name="Schirawski J."/>
            <person name="Mendoza-Mendoza A."/>
            <person name="Greilinger D."/>
            <person name="Muench K."/>
            <person name="Roessel N."/>
            <person name="Scherer M."/>
            <person name="Vranes M."/>
            <person name="Ladendorf O."/>
            <person name="Vincon V."/>
            <person name="Fuchs U."/>
            <person name="Sandrock B."/>
            <person name="Meng S."/>
            <person name="Ho E.C.H."/>
            <person name="Cahill M.J."/>
            <person name="Boyce K.J."/>
            <person name="Klose J."/>
            <person name="Klosterman S.J."/>
            <person name="Deelstra H.J."/>
            <person name="Ortiz-Castellanos L."/>
            <person name="Li W."/>
            <person name="Sanchez-Alonso P."/>
            <person name="Schreier P.H."/>
            <person name="Haeuser-Hahn I."/>
            <person name="Vaupel M."/>
            <person name="Koopmann E."/>
            <person name="Friedrich G."/>
            <person name="Voss H."/>
            <person name="Schlueter T."/>
            <person name="Margolis J."/>
            <person name="Platt D."/>
            <person name="Swimmer C."/>
            <person name="Gnirke A."/>
            <person name="Chen F."/>
            <person name="Vysotskaia V."/>
            <person name="Mannhaupt G."/>
            <person name="Gueldener U."/>
            <person name="Muensterkoetter M."/>
            <person name="Haase D."/>
            <person name="Oesterheld M."/>
            <person name="Mewes H.-W."/>
            <person name="Mauceli E.W."/>
            <person name="DeCaprio D."/>
            <person name="Wade C.M."/>
            <person name="Butler J."/>
            <person name="Young S.K."/>
            <person name="Jaffe D.B."/>
            <person name="Calvo S.E."/>
            <person name="Nusbaum C."/>
            <person name="Galagan J.E."/>
            <person name="Birren B.W."/>
        </authorList>
    </citation>
    <scope>NUCLEOTIDE SEQUENCE [LARGE SCALE GENOMIC DNA]</scope>
    <source>
        <strain>DSM 14603 / FGSC 9021 / UM521</strain>
    </source>
</reference>
<reference key="2">
    <citation type="submission" date="2014-09" db="EMBL/GenBank/DDBJ databases">
        <authorList>
            <person name="Gueldener U."/>
            <person name="Muensterkoetter M."/>
            <person name="Walter M.C."/>
            <person name="Mannhaupt G."/>
            <person name="Kahmann R."/>
        </authorList>
    </citation>
    <scope>GENOME REANNOTATION</scope>
    <source>
        <strain>DSM 14603 / FGSC 9021 / UM521</strain>
    </source>
</reference>
<gene>
    <name type="primary">CWC27</name>
    <name type="ORF">UMAG_03941</name>
</gene>
<keyword id="KW-0963">Cytoplasm</keyword>
<keyword id="KW-0413">Isomerase</keyword>
<keyword id="KW-0507">mRNA processing</keyword>
<keyword id="KW-0508">mRNA splicing</keyword>
<keyword id="KW-0539">Nucleus</keyword>
<keyword id="KW-1185">Reference proteome</keyword>
<keyword id="KW-0697">Rotamase</keyword>
<keyword id="KW-0747">Spliceosome</keyword>
<evidence type="ECO:0000250" key="1"/>
<evidence type="ECO:0000255" key="2">
    <source>
        <dbReference type="PROSITE-ProRule" id="PRU00156"/>
    </source>
</evidence>
<evidence type="ECO:0000256" key="3">
    <source>
        <dbReference type="SAM" id="MobiDB-lite"/>
    </source>
</evidence>
<evidence type="ECO:0000305" key="4"/>
<comment type="function">
    <text evidence="1">PPIases accelerate the folding of proteins. It catalyzes the cis-trans isomerization of proline imidic peptide bonds in oligopeptides. Involved in pre-mRNA splicing (By similarity).</text>
</comment>
<comment type="catalytic activity">
    <reaction>
        <text>[protein]-peptidylproline (omega=180) = [protein]-peptidylproline (omega=0)</text>
        <dbReference type="Rhea" id="RHEA:16237"/>
        <dbReference type="Rhea" id="RHEA-COMP:10747"/>
        <dbReference type="Rhea" id="RHEA-COMP:10748"/>
        <dbReference type="ChEBI" id="CHEBI:83833"/>
        <dbReference type="ChEBI" id="CHEBI:83834"/>
        <dbReference type="EC" id="5.2.1.8"/>
    </reaction>
</comment>
<comment type="subunit">
    <text evidence="1">Associated with the spliceosome.</text>
</comment>
<comment type="subcellular location">
    <subcellularLocation>
        <location evidence="1">Cytoplasm</location>
    </subcellularLocation>
    <subcellularLocation>
        <location evidence="1">Nucleus</location>
    </subcellularLocation>
</comment>
<comment type="similarity">
    <text evidence="4">Belongs to the cyclophilin-type PPIase family. CWC27 subfamily.</text>
</comment>
<feature type="chain" id="PRO_0000064187" description="Peptidyl-prolyl isomerase CWC27">
    <location>
        <begin position="1"/>
        <end position="485"/>
    </location>
</feature>
<feature type="domain" description="PPIase cyclophilin-type" evidence="2">
    <location>
        <begin position="11"/>
        <end position="167"/>
    </location>
</feature>
<feature type="region of interest" description="Disordered" evidence="3">
    <location>
        <begin position="173"/>
        <end position="485"/>
    </location>
</feature>
<feature type="compositionally biased region" description="Basic and acidic residues" evidence="3">
    <location>
        <begin position="184"/>
        <end position="204"/>
    </location>
</feature>
<feature type="compositionally biased region" description="Basic and acidic residues" evidence="3">
    <location>
        <begin position="236"/>
        <end position="247"/>
    </location>
</feature>
<feature type="compositionally biased region" description="Polar residues" evidence="3">
    <location>
        <begin position="249"/>
        <end position="270"/>
    </location>
</feature>
<feature type="compositionally biased region" description="Polar residues" evidence="3">
    <location>
        <begin position="278"/>
        <end position="292"/>
    </location>
</feature>
<feature type="compositionally biased region" description="Polar residues" evidence="3">
    <location>
        <begin position="315"/>
        <end position="325"/>
    </location>
</feature>
<feature type="compositionally biased region" description="Polar residues" evidence="3">
    <location>
        <begin position="353"/>
        <end position="370"/>
    </location>
</feature>
<feature type="compositionally biased region" description="Acidic residues" evidence="3">
    <location>
        <begin position="381"/>
        <end position="398"/>
    </location>
</feature>
<feature type="compositionally biased region" description="Basic and acidic residues" evidence="3">
    <location>
        <begin position="428"/>
        <end position="465"/>
    </location>
</feature>
<feature type="compositionally biased region" description="Basic residues" evidence="3">
    <location>
        <begin position="466"/>
        <end position="485"/>
    </location>
</feature>
<accession>Q4P7H2</accession>
<accession>A0A0D1DZC2</accession>
<dbReference type="EC" id="5.2.1.8"/>
<dbReference type="EMBL" id="CM003150">
    <property type="protein sequence ID" value="KIS67885.1"/>
    <property type="molecule type" value="Genomic_DNA"/>
</dbReference>
<dbReference type="RefSeq" id="XP_011390410.1">
    <property type="nucleotide sequence ID" value="XM_011392108.1"/>
</dbReference>
<dbReference type="SMR" id="Q4P7H2"/>
<dbReference type="FunCoup" id="Q4P7H2">
    <property type="interactions" value="299"/>
</dbReference>
<dbReference type="STRING" id="237631.Q4P7H2"/>
<dbReference type="EnsemblFungi" id="KIS67885">
    <property type="protein sequence ID" value="KIS67885"/>
    <property type="gene ID" value="UMAG_03941"/>
</dbReference>
<dbReference type="GeneID" id="23564258"/>
<dbReference type="KEGG" id="uma:UMAG_03941"/>
<dbReference type="VEuPathDB" id="FungiDB:UMAG_03941"/>
<dbReference type="eggNOG" id="KOG0885">
    <property type="taxonomic scope" value="Eukaryota"/>
</dbReference>
<dbReference type="HOGENOM" id="CLU_012062_14_4_1"/>
<dbReference type="InParanoid" id="Q4P7H2"/>
<dbReference type="OMA" id="VWHRIVP"/>
<dbReference type="OrthoDB" id="442970at2759"/>
<dbReference type="Proteomes" id="UP000000561">
    <property type="component" value="Chromosome 11"/>
</dbReference>
<dbReference type="GO" id="GO:0071013">
    <property type="term" value="C:catalytic step 2 spliceosome"/>
    <property type="evidence" value="ECO:0000318"/>
    <property type="project" value="GO_Central"/>
</dbReference>
<dbReference type="GO" id="GO:0005737">
    <property type="term" value="C:cytoplasm"/>
    <property type="evidence" value="ECO:0007669"/>
    <property type="project" value="UniProtKB-SubCell"/>
</dbReference>
<dbReference type="GO" id="GO:0003755">
    <property type="term" value="F:peptidyl-prolyl cis-trans isomerase activity"/>
    <property type="evidence" value="ECO:0007669"/>
    <property type="project" value="UniProtKB-KW"/>
</dbReference>
<dbReference type="GO" id="GO:0006397">
    <property type="term" value="P:mRNA processing"/>
    <property type="evidence" value="ECO:0007669"/>
    <property type="project" value="UniProtKB-KW"/>
</dbReference>
<dbReference type="GO" id="GO:0006457">
    <property type="term" value="P:protein folding"/>
    <property type="evidence" value="ECO:0000318"/>
    <property type="project" value="GO_Central"/>
</dbReference>
<dbReference type="GO" id="GO:0008380">
    <property type="term" value="P:RNA splicing"/>
    <property type="evidence" value="ECO:0007669"/>
    <property type="project" value="UniProtKB-KW"/>
</dbReference>
<dbReference type="CDD" id="cd01925">
    <property type="entry name" value="cyclophilin_CeCYP16-like"/>
    <property type="match status" value="1"/>
</dbReference>
<dbReference type="FunFam" id="2.40.100.10:FF:000081">
    <property type="entry name" value="Peptidyl-prolyl cis-trans isomerase"/>
    <property type="match status" value="1"/>
</dbReference>
<dbReference type="Gene3D" id="2.40.100.10">
    <property type="entry name" value="Cyclophilin-like"/>
    <property type="match status" value="1"/>
</dbReference>
<dbReference type="InterPro" id="IPR029000">
    <property type="entry name" value="Cyclophilin-like_dom_sf"/>
</dbReference>
<dbReference type="InterPro" id="IPR020892">
    <property type="entry name" value="Cyclophilin-type_PPIase_CS"/>
</dbReference>
<dbReference type="InterPro" id="IPR002130">
    <property type="entry name" value="Cyclophilin-type_PPIase_dom"/>
</dbReference>
<dbReference type="InterPro" id="IPR044666">
    <property type="entry name" value="Cyclophilin_A-like"/>
</dbReference>
<dbReference type="PANTHER" id="PTHR45625">
    <property type="entry name" value="PEPTIDYL-PROLYL CIS-TRANS ISOMERASE-RELATED"/>
    <property type="match status" value="1"/>
</dbReference>
<dbReference type="PANTHER" id="PTHR45625:SF6">
    <property type="entry name" value="SPLICEOSOME-ASSOCIATED PROTEIN CWC27 HOMOLOG"/>
    <property type="match status" value="1"/>
</dbReference>
<dbReference type="Pfam" id="PF00160">
    <property type="entry name" value="Pro_isomerase"/>
    <property type="match status" value="1"/>
</dbReference>
<dbReference type="PRINTS" id="PR00153">
    <property type="entry name" value="CSAPPISMRASE"/>
</dbReference>
<dbReference type="SUPFAM" id="SSF50891">
    <property type="entry name" value="Cyclophilin-like"/>
    <property type="match status" value="1"/>
</dbReference>
<dbReference type="PROSITE" id="PS00170">
    <property type="entry name" value="CSA_PPIASE_1"/>
    <property type="match status" value="1"/>
</dbReference>
<dbReference type="PROSITE" id="PS50072">
    <property type="entry name" value="CSA_PPIASE_2"/>
    <property type="match status" value="1"/>
</dbReference>
<protein>
    <recommendedName>
        <fullName>Peptidyl-prolyl isomerase CWC27</fullName>
        <shortName>PPIase CWC27</shortName>
        <ecNumber>5.2.1.8</ecNumber>
    </recommendedName>
    <alternativeName>
        <fullName>Rotamase CWC27</fullName>
    </alternativeName>
</protein>
<name>CWC27_MYCMD</name>
<proteinExistence type="inferred from homology"/>